<comment type="function">
    <text evidence="1">The key enzymatic reactions in nitrogen fixation are catalyzed by the nitrogenase complex, which has 2 components: the iron protein and the molybdenum-iron protein.</text>
</comment>
<comment type="catalytic activity">
    <reaction>
        <text>N2 + 8 reduced [2Fe-2S]-[ferredoxin] + 16 ATP + 16 H2O = H2 + 8 oxidized [2Fe-2S]-[ferredoxin] + 2 NH4(+) + 16 ADP + 16 phosphate + 6 H(+)</text>
        <dbReference type="Rhea" id="RHEA:21448"/>
        <dbReference type="Rhea" id="RHEA-COMP:10000"/>
        <dbReference type="Rhea" id="RHEA-COMP:10001"/>
        <dbReference type="ChEBI" id="CHEBI:15377"/>
        <dbReference type="ChEBI" id="CHEBI:15378"/>
        <dbReference type="ChEBI" id="CHEBI:17997"/>
        <dbReference type="ChEBI" id="CHEBI:18276"/>
        <dbReference type="ChEBI" id="CHEBI:28938"/>
        <dbReference type="ChEBI" id="CHEBI:30616"/>
        <dbReference type="ChEBI" id="CHEBI:33737"/>
        <dbReference type="ChEBI" id="CHEBI:33738"/>
        <dbReference type="ChEBI" id="CHEBI:43474"/>
        <dbReference type="ChEBI" id="CHEBI:456216"/>
        <dbReference type="EC" id="1.18.6.1"/>
    </reaction>
</comment>
<comment type="cofactor">
    <cofactor evidence="1">
        <name>[4Fe-4S] cluster</name>
        <dbReference type="ChEBI" id="CHEBI:49883"/>
    </cofactor>
    <text evidence="1">Binds 1 [4Fe-4S] cluster per dimer.</text>
</comment>
<comment type="subunit">
    <text evidence="1">Homodimer.</text>
</comment>
<comment type="similarity">
    <text evidence="3">Belongs to the NifH/BchL/ChlL family.</text>
</comment>
<proteinExistence type="inferred from homology"/>
<reference key="1">
    <citation type="submission" date="1990-03" db="EMBL/GenBank/DDBJ databases">
        <authorList>
            <person name="Klein-Lankhorst R.M."/>
            <person name="Hontelez J.G.J."/>
        </authorList>
    </citation>
    <scope>NUCLEOTIDE SEQUENCE [GENOMIC DNA]</scope>
    <source>
        <strain>PRE</strain>
    </source>
</reference>
<reference key="2">
    <citation type="journal article" date="1990" name="Gene">
        <title>The nifH promoter region of Rhizobium leguminosarum: nucleotide sequence and promoter elements controlling activation by NifA protein.</title>
        <authorList>
            <person name="Roelvink P.W."/>
            <person name="Harmsen M."/>
            <person name="van Kammen A."/>
            <person name="van den Bos R.C."/>
        </authorList>
    </citation>
    <scope>NUCLEOTIDE SEQUENCE [GENOMIC DNA] OF 1-30</scope>
</reference>
<reference key="3">
    <citation type="journal article" date="1983" name="Cell">
        <title>Structural relationships among Rhizobium meliloti symbiotic promoters.</title>
        <authorList>
            <person name="Better M."/>
            <person name="Lewis B."/>
            <person name="Corbin D."/>
            <person name="Ditta G.S."/>
            <person name="Helinski D.R."/>
        </authorList>
    </citation>
    <scope>NUCLEOTIDE SEQUENCE [GENOMIC DNA] OF 1-30</scope>
</reference>
<gene>
    <name type="primary">nifH</name>
</gene>
<protein>
    <recommendedName>
        <fullName>Nitrogenase iron protein</fullName>
        <ecNumber>1.18.6.1</ecNumber>
    </recommendedName>
    <alternativeName>
        <fullName>Nitrogenase Fe protein</fullName>
    </alternativeName>
    <alternativeName>
        <fullName>Nitrogenase component II</fullName>
    </alternativeName>
    <alternativeName>
        <fullName>Nitrogenase reductase</fullName>
    </alternativeName>
</protein>
<keyword id="KW-0004">4Fe-4S</keyword>
<keyword id="KW-0067">ATP-binding</keyword>
<keyword id="KW-0408">Iron</keyword>
<keyword id="KW-0411">Iron-sulfur</keyword>
<keyword id="KW-0479">Metal-binding</keyword>
<keyword id="KW-0535">Nitrogen fixation</keyword>
<keyword id="KW-0547">Nucleotide-binding</keyword>
<keyword id="KW-0560">Oxidoreductase</keyword>
<dbReference type="EC" id="1.18.6.1"/>
<dbReference type="EMBL" id="X51750">
    <property type="protein sequence ID" value="CAA36039.1"/>
    <property type="molecule type" value="Genomic_DNA"/>
</dbReference>
<dbReference type="EMBL" id="M36435">
    <property type="protein sequence ID" value="AAA26318.1"/>
    <property type="molecule type" value="Genomic_DNA"/>
</dbReference>
<dbReference type="EMBL" id="AH000925">
    <property type="protein sequence ID" value="AAA26332.1"/>
    <property type="molecule type" value="Genomic_DNA"/>
</dbReference>
<dbReference type="PIR" id="S08048">
    <property type="entry name" value="S08048"/>
</dbReference>
<dbReference type="SMR" id="P20623"/>
<dbReference type="eggNOG" id="COG1348">
    <property type="taxonomic scope" value="Bacteria"/>
</dbReference>
<dbReference type="GO" id="GO:0051539">
    <property type="term" value="F:4 iron, 4 sulfur cluster binding"/>
    <property type="evidence" value="ECO:0007669"/>
    <property type="project" value="UniProtKB-KW"/>
</dbReference>
<dbReference type="GO" id="GO:0005524">
    <property type="term" value="F:ATP binding"/>
    <property type="evidence" value="ECO:0007669"/>
    <property type="project" value="UniProtKB-KW"/>
</dbReference>
<dbReference type="GO" id="GO:0046872">
    <property type="term" value="F:metal ion binding"/>
    <property type="evidence" value="ECO:0007669"/>
    <property type="project" value="UniProtKB-KW"/>
</dbReference>
<dbReference type="GO" id="GO:0016163">
    <property type="term" value="F:nitrogenase activity"/>
    <property type="evidence" value="ECO:0007669"/>
    <property type="project" value="UniProtKB-EC"/>
</dbReference>
<dbReference type="GO" id="GO:0009399">
    <property type="term" value="P:nitrogen fixation"/>
    <property type="evidence" value="ECO:0007669"/>
    <property type="project" value="UniProtKB-KW"/>
</dbReference>
<dbReference type="Gene3D" id="3.40.50.300">
    <property type="entry name" value="P-loop containing nucleotide triphosphate hydrolases"/>
    <property type="match status" value="1"/>
</dbReference>
<dbReference type="InterPro" id="IPR000392">
    <property type="entry name" value="NifH/frxC"/>
</dbReference>
<dbReference type="InterPro" id="IPR027417">
    <property type="entry name" value="P-loop_NTPase"/>
</dbReference>
<dbReference type="Pfam" id="PF00142">
    <property type="entry name" value="Fer4_NifH"/>
    <property type="match status" value="1"/>
</dbReference>
<dbReference type="SUPFAM" id="SSF52540">
    <property type="entry name" value="P-loop containing nucleoside triphosphate hydrolases"/>
    <property type="match status" value="1"/>
</dbReference>
<name>NIFH_RHILE</name>
<feature type="chain" id="PRO_0000139522" description="Nitrogenase iron protein">
    <location>
        <begin position="1"/>
        <end position="47" status="greater than"/>
    </location>
</feature>
<feature type="binding site" evidence="2">
    <location>
        <begin position="11"/>
        <end position="18"/>
    </location>
    <ligand>
        <name>ATP</name>
        <dbReference type="ChEBI" id="CHEBI:30616"/>
    </ligand>
</feature>
<feature type="non-terminal residue">
    <location>
        <position position="47"/>
    </location>
</feature>
<accession>P20623</accession>
<sequence>MAALRQIAFYGKGGIGKSTTSQNTLAALVDHHVPRIPMIIRIGGYAQ</sequence>
<evidence type="ECO:0000250" key="1"/>
<evidence type="ECO:0000255" key="2"/>
<evidence type="ECO:0000305" key="3"/>
<organism>
    <name type="scientific">Rhizobium leguminosarum</name>
    <dbReference type="NCBI Taxonomy" id="384"/>
    <lineage>
        <taxon>Bacteria</taxon>
        <taxon>Pseudomonadati</taxon>
        <taxon>Pseudomonadota</taxon>
        <taxon>Alphaproteobacteria</taxon>
        <taxon>Hyphomicrobiales</taxon>
        <taxon>Rhizobiaceae</taxon>
        <taxon>Rhizobium/Agrobacterium group</taxon>
        <taxon>Rhizobium</taxon>
    </lineage>
</organism>